<reference key="1">
    <citation type="journal article" date="1996" name="Biochem. Mol. Biol. Int.">
        <title>Organization and nucleotide sequences of ten ribosomal protein genes from the region equivalent to the S10 operon in the archaebacterium, Halobacterium halobium.</title>
        <authorList>
            <person name="Miyokawa T."/>
            <person name="Urayama T."/>
            <person name="Shimooka K."/>
            <person name="Itoh T."/>
        </authorList>
    </citation>
    <scope>NUCLEOTIDE SEQUENCE [GENOMIC DNA]</scope>
</reference>
<reference key="2">
    <citation type="journal article" date="2000" name="Proc. Natl. Acad. Sci. U.S.A.">
        <title>Genome sequence of Halobacterium species NRC-1.</title>
        <authorList>
            <person name="Ng W.V."/>
            <person name="Kennedy S.P."/>
            <person name="Mahairas G.G."/>
            <person name="Berquist B."/>
            <person name="Pan M."/>
            <person name="Shukla H.D."/>
            <person name="Lasky S.R."/>
            <person name="Baliga N.S."/>
            <person name="Thorsson V."/>
            <person name="Sbrogna J."/>
            <person name="Swartzell S."/>
            <person name="Weir D."/>
            <person name="Hall J."/>
            <person name="Dahl T.A."/>
            <person name="Welti R."/>
            <person name="Goo Y.A."/>
            <person name="Leithauser B."/>
            <person name="Keller K."/>
            <person name="Cruz R."/>
            <person name="Danson M.J."/>
            <person name="Hough D.W."/>
            <person name="Maddocks D.G."/>
            <person name="Jablonski P.E."/>
            <person name="Krebs M.P."/>
            <person name="Angevine C.M."/>
            <person name="Dale H."/>
            <person name="Isenbarger T.A."/>
            <person name="Peck R.F."/>
            <person name="Pohlschroder M."/>
            <person name="Spudich J.L."/>
            <person name="Jung K.-H."/>
            <person name="Alam M."/>
            <person name="Freitas T."/>
            <person name="Hou S."/>
            <person name="Daniels C.J."/>
            <person name="Dennis P.P."/>
            <person name="Omer A.D."/>
            <person name="Ebhardt H."/>
            <person name="Lowe T.M."/>
            <person name="Liang P."/>
            <person name="Riley M."/>
            <person name="Hood L."/>
            <person name="DasSarma S."/>
        </authorList>
    </citation>
    <scope>NUCLEOTIDE SEQUENCE [LARGE SCALE GENOMIC DNA]</scope>
    <source>
        <strain>ATCC 700922 / JCM 11081 / NRC-1</strain>
    </source>
</reference>
<keyword id="KW-1185">Reference proteome</keyword>
<keyword id="KW-0687">Ribonucleoprotein</keyword>
<keyword id="KW-0689">Ribosomal protein</keyword>
<keyword id="KW-0694">RNA-binding</keyword>
<keyword id="KW-0699">rRNA-binding</keyword>
<name>RL14_HALSA</name>
<dbReference type="EMBL" id="AB006961">
    <property type="protein sequence ID" value="BAA22280.1"/>
    <property type="molecule type" value="Genomic_DNA"/>
</dbReference>
<dbReference type="EMBL" id="AE004437">
    <property type="protein sequence ID" value="AAG19946.1"/>
    <property type="molecule type" value="Genomic_DNA"/>
</dbReference>
<dbReference type="PIR" id="F84322">
    <property type="entry name" value="F84322"/>
</dbReference>
<dbReference type="PIR" id="T43826">
    <property type="entry name" value="T43826"/>
</dbReference>
<dbReference type="RefSeq" id="WP_010903244.1">
    <property type="nucleotide sequence ID" value="NC_002607.1"/>
</dbReference>
<dbReference type="SMR" id="O24787"/>
<dbReference type="FunCoup" id="O24787">
    <property type="interactions" value="184"/>
</dbReference>
<dbReference type="STRING" id="64091.VNG_1701G"/>
<dbReference type="PaxDb" id="64091-VNG_1701G"/>
<dbReference type="KEGG" id="hal:VNG_1701G"/>
<dbReference type="PATRIC" id="fig|64091.14.peg.1298"/>
<dbReference type="HOGENOM" id="CLU_095071_3_0_2"/>
<dbReference type="InParanoid" id="O24787"/>
<dbReference type="OrthoDB" id="23569at2157"/>
<dbReference type="PhylomeDB" id="O24787"/>
<dbReference type="Proteomes" id="UP000000554">
    <property type="component" value="Chromosome"/>
</dbReference>
<dbReference type="GO" id="GO:0022625">
    <property type="term" value="C:cytosolic large ribosomal subunit"/>
    <property type="evidence" value="ECO:0000318"/>
    <property type="project" value="GO_Central"/>
</dbReference>
<dbReference type="GO" id="GO:0070180">
    <property type="term" value="F:large ribosomal subunit rRNA binding"/>
    <property type="evidence" value="ECO:0000318"/>
    <property type="project" value="GO_Central"/>
</dbReference>
<dbReference type="GO" id="GO:0003735">
    <property type="term" value="F:structural constituent of ribosome"/>
    <property type="evidence" value="ECO:0000318"/>
    <property type="project" value="GO_Central"/>
</dbReference>
<dbReference type="GO" id="GO:0006412">
    <property type="term" value="P:translation"/>
    <property type="evidence" value="ECO:0007669"/>
    <property type="project" value="UniProtKB-UniRule"/>
</dbReference>
<dbReference type="CDD" id="cd00337">
    <property type="entry name" value="Ribosomal_uL14"/>
    <property type="match status" value="1"/>
</dbReference>
<dbReference type="FunFam" id="2.40.150.20:FF:000007">
    <property type="entry name" value="50S ribosomal protein L14"/>
    <property type="match status" value="1"/>
</dbReference>
<dbReference type="Gene3D" id="2.40.150.20">
    <property type="entry name" value="Ribosomal protein L14"/>
    <property type="match status" value="1"/>
</dbReference>
<dbReference type="HAMAP" id="MF_01367">
    <property type="entry name" value="Ribosomal_uL14"/>
    <property type="match status" value="1"/>
</dbReference>
<dbReference type="InterPro" id="IPR000218">
    <property type="entry name" value="Ribosomal_uL14"/>
</dbReference>
<dbReference type="InterPro" id="IPR019971">
    <property type="entry name" value="Ribosomal_uL14_arc"/>
</dbReference>
<dbReference type="InterPro" id="IPR019972">
    <property type="entry name" value="Ribosomal_uL14_CS"/>
</dbReference>
<dbReference type="InterPro" id="IPR036853">
    <property type="entry name" value="Ribosomal_uL14_sf"/>
</dbReference>
<dbReference type="NCBIfam" id="NF006344">
    <property type="entry name" value="PRK08571.1"/>
    <property type="match status" value="1"/>
</dbReference>
<dbReference type="NCBIfam" id="TIGR03673">
    <property type="entry name" value="uL14_arch"/>
    <property type="match status" value="1"/>
</dbReference>
<dbReference type="PANTHER" id="PTHR11761">
    <property type="entry name" value="50S/60S RIBOSOMAL PROTEIN L14/L23"/>
    <property type="match status" value="1"/>
</dbReference>
<dbReference type="PANTHER" id="PTHR11761:SF8">
    <property type="entry name" value="LARGE RIBOSOMAL SUBUNIT PROTEIN UL14"/>
    <property type="match status" value="1"/>
</dbReference>
<dbReference type="Pfam" id="PF00238">
    <property type="entry name" value="Ribosomal_L14"/>
    <property type="match status" value="1"/>
</dbReference>
<dbReference type="SMART" id="SM01374">
    <property type="entry name" value="Ribosomal_L14"/>
    <property type="match status" value="1"/>
</dbReference>
<dbReference type="SUPFAM" id="SSF50193">
    <property type="entry name" value="Ribosomal protein L14"/>
    <property type="match status" value="1"/>
</dbReference>
<dbReference type="PROSITE" id="PS00049">
    <property type="entry name" value="RIBOSOMAL_L14"/>
    <property type="match status" value="1"/>
</dbReference>
<comment type="function">
    <text evidence="1">Binds to 23S rRNA. Forms part of two intersubunit bridges in the 70S ribosome.</text>
</comment>
<comment type="subunit">
    <text evidence="1">Part of the 50S ribosomal subunit. Forms a cluster with proteins L3 and L24e, part of which may contact the 16S rRNA in 2 intersubunit bridges.</text>
</comment>
<comment type="similarity">
    <text evidence="1">Belongs to the universal ribosomal protein uL14 family.</text>
</comment>
<organism>
    <name type="scientific">Halobacterium salinarum (strain ATCC 700922 / JCM 11081 / NRC-1)</name>
    <name type="common">Halobacterium halobium</name>
    <dbReference type="NCBI Taxonomy" id="64091"/>
    <lineage>
        <taxon>Archaea</taxon>
        <taxon>Methanobacteriati</taxon>
        <taxon>Methanobacteriota</taxon>
        <taxon>Stenosarchaea group</taxon>
        <taxon>Halobacteria</taxon>
        <taxon>Halobacteriales</taxon>
        <taxon>Halobacteriaceae</taxon>
        <taxon>Halobacterium</taxon>
        <taxon>Halobacterium salinarum NRC-34001</taxon>
    </lineage>
</organism>
<sequence>MEAIKADITQGLEKGSLITCADNTGARELKITSVMGYQGRKNRHPKAGLGDTITVSVTKGTPEMRRQVLEAVVVRQRKPIRRPDGTRVKFEDNAAVIIDDLGEPRGTEIKGPISREVAERYGTIASTATMIV</sequence>
<proteinExistence type="inferred from homology"/>
<protein>
    <recommendedName>
        <fullName evidence="1">Large ribosomal subunit protein uL14</fullName>
    </recommendedName>
    <alternativeName>
        <fullName evidence="2">50S ribosomal protein L14</fullName>
    </alternativeName>
    <alternativeName>
        <fullName>HHAL14</fullName>
    </alternativeName>
</protein>
<gene>
    <name evidence="1" type="primary">rpl14</name>
    <name type="ordered locus">VNG_1701G</name>
</gene>
<evidence type="ECO:0000255" key="1">
    <source>
        <dbReference type="HAMAP-Rule" id="MF_01367"/>
    </source>
</evidence>
<evidence type="ECO:0000305" key="2"/>
<accession>O24787</accession>
<accession>Q9HPC4</accession>
<feature type="chain" id="PRO_0000128572" description="Large ribosomal subunit protein uL14">
    <location>
        <begin position="1"/>
        <end position="132"/>
    </location>
</feature>